<feature type="chain" id="PRO_0000089806" description="Swi5-dependent recombination DNA repair protein 1 homolog">
    <location>
        <begin position="1"/>
        <end position="319"/>
    </location>
</feature>
<feature type="region of interest" description="Disordered" evidence="3">
    <location>
        <begin position="1"/>
        <end position="215"/>
    </location>
</feature>
<feature type="coiled-coil region" evidence="2">
    <location>
        <begin position="220"/>
        <end position="270"/>
    </location>
</feature>
<feature type="compositionally biased region" description="Low complexity" evidence="3">
    <location>
        <begin position="16"/>
        <end position="25"/>
    </location>
</feature>
<feature type="compositionally biased region" description="Pro residues" evidence="3">
    <location>
        <begin position="26"/>
        <end position="40"/>
    </location>
</feature>
<feature type="compositionally biased region" description="Pro residues" evidence="3">
    <location>
        <begin position="65"/>
        <end position="116"/>
    </location>
</feature>
<feature type="compositionally biased region" description="Polar residues" evidence="3">
    <location>
        <begin position="117"/>
        <end position="127"/>
    </location>
</feature>
<feature type="compositionally biased region" description="Basic and acidic residues" evidence="3">
    <location>
        <begin position="167"/>
        <end position="203"/>
    </location>
</feature>
<feature type="modified residue" description="Phosphoserine" evidence="8 9 10 11">
    <location>
        <position position="67"/>
    </location>
</feature>
<feature type="modified residue" description="Phosphoserine" evidence="9 10 11">
    <location>
        <position position="71"/>
    </location>
</feature>
<feature type="modified residue" description="Phosphoserine" evidence="8 9 10 11">
    <location>
        <position position="83"/>
    </location>
</feature>
<feature type="modified residue" description="Phosphoserine" evidence="9 10 11">
    <location>
        <position position="87"/>
    </location>
</feature>
<feature type="modified residue" description="Phosphoserine" evidence="8 9 10 11">
    <location>
        <position position="99"/>
    </location>
</feature>
<feature type="modified residue" description="Phosphoserine" evidence="9 10 11">
    <location>
        <position position="103"/>
    </location>
</feature>
<feature type="modified residue" description="Phosphoserine" evidence="1">
    <location>
        <position position="140"/>
    </location>
</feature>
<feature type="modified residue" description="Phosphoserine" evidence="11">
    <location>
        <position position="143"/>
    </location>
</feature>
<feature type="splice variant" id="VSP_040905" description="In isoform 2." evidence="5 6">
    <location>
        <begin position="47"/>
        <end position="62"/>
    </location>
</feature>
<feature type="splice variant" id="VSP_040906" description="In isoform 3." evidence="6">
    <location>
        <begin position="62"/>
        <end position="77"/>
    </location>
</feature>
<feature type="splice variant" id="VSP_040907" description="In isoform 3." evidence="6">
    <location>
        <begin position="140"/>
        <end position="207"/>
    </location>
</feature>
<feature type="sequence conflict" description="In Ref. 1; BAC37045." evidence="7" ref="1">
    <original>A</original>
    <variation>S</variation>
    <location>
        <position position="137"/>
    </location>
</feature>
<feature type="sequence conflict" description="In Ref. 1; BAE39495." evidence="7" ref="1">
    <original>E</original>
    <variation>D</variation>
    <location>
        <position position="171"/>
    </location>
</feature>
<feature type="sequence conflict" description="In Ref. 1; BAE40043." evidence="7" ref="1">
    <original>P</original>
    <variation>Q</variation>
    <location>
        <position position="213"/>
    </location>
</feature>
<feature type="sequence conflict" description="In Ref. 1; BAE40043." evidence="7" ref="1">
    <original>E</original>
    <variation>K</variation>
    <location>
        <position position="228"/>
    </location>
</feature>
<feature type="sequence conflict" description="In Ref. 1; BAB27680." evidence="7" ref="1">
    <original>K</original>
    <variation>R</variation>
    <location>
        <position position="290"/>
    </location>
</feature>
<feature type="sequence conflict" description="In Ref. 1; BAE39495." evidence="7" ref="1">
    <original>H</original>
    <variation>R</variation>
    <location>
        <position position="308"/>
    </location>
</feature>
<name>SFR1_MOUSE</name>
<reference key="1">
    <citation type="journal article" date="2005" name="Science">
        <title>The transcriptional landscape of the mammalian genome.</title>
        <authorList>
            <person name="Carninci P."/>
            <person name="Kasukawa T."/>
            <person name="Katayama S."/>
            <person name="Gough J."/>
            <person name="Frith M.C."/>
            <person name="Maeda N."/>
            <person name="Oyama R."/>
            <person name="Ravasi T."/>
            <person name="Lenhard B."/>
            <person name="Wells C."/>
            <person name="Kodzius R."/>
            <person name="Shimokawa K."/>
            <person name="Bajic V.B."/>
            <person name="Brenner S.E."/>
            <person name="Batalov S."/>
            <person name="Forrest A.R."/>
            <person name="Zavolan M."/>
            <person name="Davis M.J."/>
            <person name="Wilming L.G."/>
            <person name="Aidinis V."/>
            <person name="Allen J.E."/>
            <person name="Ambesi-Impiombato A."/>
            <person name="Apweiler R."/>
            <person name="Aturaliya R.N."/>
            <person name="Bailey T.L."/>
            <person name="Bansal M."/>
            <person name="Baxter L."/>
            <person name="Beisel K.W."/>
            <person name="Bersano T."/>
            <person name="Bono H."/>
            <person name="Chalk A.M."/>
            <person name="Chiu K.P."/>
            <person name="Choudhary V."/>
            <person name="Christoffels A."/>
            <person name="Clutterbuck D.R."/>
            <person name="Crowe M.L."/>
            <person name="Dalla E."/>
            <person name="Dalrymple B.P."/>
            <person name="de Bono B."/>
            <person name="Della Gatta G."/>
            <person name="di Bernardo D."/>
            <person name="Down T."/>
            <person name="Engstrom P."/>
            <person name="Fagiolini M."/>
            <person name="Faulkner G."/>
            <person name="Fletcher C.F."/>
            <person name="Fukushima T."/>
            <person name="Furuno M."/>
            <person name="Futaki S."/>
            <person name="Gariboldi M."/>
            <person name="Georgii-Hemming P."/>
            <person name="Gingeras T.R."/>
            <person name="Gojobori T."/>
            <person name="Green R.E."/>
            <person name="Gustincich S."/>
            <person name="Harbers M."/>
            <person name="Hayashi Y."/>
            <person name="Hensch T.K."/>
            <person name="Hirokawa N."/>
            <person name="Hill D."/>
            <person name="Huminiecki L."/>
            <person name="Iacono M."/>
            <person name="Ikeo K."/>
            <person name="Iwama A."/>
            <person name="Ishikawa T."/>
            <person name="Jakt M."/>
            <person name="Kanapin A."/>
            <person name="Katoh M."/>
            <person name="Kawasawa Y."/>
            <person name="Kelso J."/>
            <person name="Kitamura H."/>
            <person name="Kitano H."/>
            <person name="Kollias G."/>
            <person name="Krishnan S.P."/>
            <person name="Kruger A."/>
            <person name="Kummerfeld S.K."/>
            <person name="Kurochkin I.V."/>
            <person name="Lareau L.F."/>
            <person name="Lazarevic D."/>
            <person name="Lipovich L."/>
            <person name="Liu J."/>
            <person name="Liuni S."/>
            <person name="McWilliam S."/>
            <person name="Madan Babu M."/>
            <person name="Madera M."/>
            <person name="Marchionni L."/>
            <person name="Matsuda H."/>
            <person name="Matsuzawa S."/>
            <person name="Miki H."/>
            <person name="Mignone F."/>
            <person name="Miyake S."/>
            <person name="Morris K."/>
            <person name="Mottagui-Tabar S."/>
            <person name="Mulder N."/>
            <person name="Nakano N."/>
            <person name="Nakauchi H."/>
            <person name="Ng P."/>
            <person name="Nilsson R."/>
            <person name="Nishiguchi S."/>
            <person name="Nishikawa S."/>
            <person name="Nori F."/>
            <person name="Ohara O."/>
            <person name="Okazaki Y."/>
            <person name="Orlando V."/>
            <person name="Pang K.C."/>
            <person name="Pavan W.J."/>
            <person name="Pavesi G."/>
            <person name="Pesole G."/>
            <person name="Petrovsky N."/>
            <person name="Piazza S."/>
            <person name="Reed J."/>
            <person name="Reid J.F."/>
            <person name="Ring B.Z."/>
            <person name="Ringwald M."/>
            <person name="Rost B."/>
            <person name="Ruan Y."/>
            <person name="Salzberg S.L."/>
            <person name="Sandelin A."/>
            <person name="Schneider C."/>
            <person name="Schoenbach C."/>
            <person name="Sekiguchi K."/>
            <person name="Semple C.A."/>
            <person name="Seno S."/>
            <person name="Sessa L."/>
            <person name="Sheng Y."/>
            <person name="Shibata Y."/>
            <person name="Shimada H."/>
            <person name="Shimada K."/>
            <person name="Silva D."/>
            <person name="Sinclair B."/>
            <person name="Sperling S."/>
            <person name="Stupka E."/>
            <person name="Sugiura K."/>
            <person name="Sultana R."/>
            <person name="Takenaka Y."/>
            <person name="Taki K."/>
            <person name="Tammoja K."/>
            <person name="Tan S.L."/>
            <person name="Tang S."/>
            <person name="Taylor M.S."/>
            <person name="Tegner J."/>
            <person name="Teichmann S.A."/>
            <person name="Ueda H.R."/>
            <person name="van Nimwegen E."/>
            <person name="Verardo R."/>
            <person name="Wei C.L."/>
            <person name="Yagi K."/>
            <person name="Yamanishi H."/>
            <person name="Zabarovsky E."/>
            <person name="Zhu S."/>
            <person name="Zimmer A."/>
            <person name="Hide W."/>
            <person name="Bult C."/>
            <person name="Grimmond S.M."/>
            <person name="Teasdale R.D."/>
            <person name="Liu E.T."/>
            <person name="Brusic V."/>
            <person name="Quackenbush J."/>
            <person name="Wahlestedt C."/>
            <person name="Mattick J.S."/>
            <person name="Hume D.A."/>
            <person name="Kai C."/>
            <person name="Sasaki D."/>
            <person name="Tomaru Y."/>
            <person name="Fukuda S."/>
            <person name="Kanamori-Katayama M."/>
            <person name="Suzuki M."/>
            <person name="Aoki J."/>
            <person name="Arakawa T."/>
            <person name="Iida J."/>
            <person name="Imamura K."/>
            <person name="Itoh M."/>
            <person name="Kato T."/>
            <person name="Kawaji H."/>
            <person name="Kawagashira N."/>
            <person name="Kawashima T."/>
            <person name="Kojima M."/>
            <person name="Kondo S."/>
            <person name="Konno H."/>
            <person name="Nakano K."/>
            <person name="Ninomiya N."/>
            <person name="Nishio T."/>
            <person name="Okada M."/>
            <person name="Plessy C."/>
            <person name="Shibata K."/>
            <person name="Shiraki T."/>
            <person name="Suzuki S."/>
            <person name="Tagami M."/>
            <person name="Waki K."/>
            <person name="Watahiki A."/>
            <person name="Okamura-Oho Y."/>
            <person name="Suzuki H."/>
            <person name="Kawai J."/>
            <person name="Hayashizaki Y."/>
        </authorList>
    </citation>
    <scope>NUCLEOTIDE SEQUENCE [LARGE SCALE MRNA] (ISOFORMS 1; 2 AND 3)</scope>
    <source>
        <strain>C57BL/6J</strain>
        <strain>DBA/2J</strain>
        <tissue>Amnion</tissue>
        <tissue>Forelimb</tissue>
        <tissue>Head</tissue>
        <tissue>Medulla oblongata</tissue>
        <tissue>Placenta</tissue>
        <tissue>Stomach</tissue>
        <tissue>Testis</tissue>
    </source>
</reference>
<reference key="2">
    <citation type="journal article" date="2004" name="Genome Res.">
        <title>The status, quality, and expansion of the NIH full-length cDNA project: the Mammalian Gene Collection (MGC).</title>
        <authorList>
            <consortium name="The MGC Project Team"/>
        </authorList>
    </citation>
    <scope>NUCLEOTIDE SEQUENCE [LARGE SCALE MRNA] (ISOFORM 2)</scope>
    <source>
        <strain>FVB/N-3</strain>
        <tissue>Mammary gland</tissue>
    </source>
</reference>
<reference key="3">
    <citation type="journal article" date="2004" name="Mol. Cell. Proteomics">
        <title>Phosphoproteomic analysis of the developing mouse brain.</title>
        <authorList>
            <person name="Ballif B.A."/>
            <person name="Villen J."/>
            <person name="Beausoleil S.A."/>
            <person name="Schwartz D."/>
            <person name="Gygi S.P."/>
        </authorList>
    </citation>
    <scope>PHOSPHORYLATION [LARGE SCALE ANALYSIS] AT SER-67; SER-83 AND SER-99</scope>
    <scope>IDENTIFICATION BY MASS SPECTROMETRY [LARGE SCALE ANALYSIS]</scope>
    <source>
        <tissue>Embryonic brain</tissue>
    </source>
</reference>
<reference key="4">
    <citation type="journal article" date="2007" name="Proc. Natl. Acad. Sci. U.S.A.">
        <title>Large-scale phosphorylation analysis of mouse liver.</title>
        <authorList>
            <person name="Villen J."/>
            <person name="Beausoleil S.A."/>
            <person name="Gerber S.A."/>
            <person name="Gygi S.P."/>
        </authorList>
    </citation>
    <scope>PHOSPHORYLATION [LARGE SCALE ANALYSIS] AT SER-67; SER-71; SER-83; SER-87; SER-99 AND SER-103</scope>
    <scope>IDENTIFICATION BY MASS SPECTROMETRY [LARGE SCALE ANALYSIS]</scope>
    <source>
        <tissue>Liver</tissue>
    </source>
</reference>
<reference key="5">
    <citation type="journal article" date="2009" name="Mol. Cell. Proteomics">
        <title>Large scale localization of protein phosphorylation by use of electron capture dissociation mass spectrometry.</title>
        <authorList>
            <person name="Sweet S.M."/>
            <person name="Bailey C.M."/>
            <person name="Cunningham D.L."/>
            <person name="Heath J.K."/>
            <person name="Cooper H.J."/>
        </authorList>
    </citation>
    <scope>PHOSPHORYLATION [LARGE SCALE ANALYSIS] AT SER-67; SER-71; SER-83; SER-87; SER-99 AND SER-103</scope>
    <scope>IDENTIFICATION BY MASS SPECTROMETRY [LARGE SCALE ANALYSIS]</scope>
    <source>
        <tissue>Embryonic fibroblast</tissue>
    </source>
</reference>
<reference key="6">
    <citation type="journal article" date="2010" name="Cell">
        <title>A tissue-specific atlas of mouse protein phosphorylation and expression.</title>
        <authorList>
            <person name="Huttlin E.L."/>
            <person name="Jedrychowski M.P."/>
            <person name="Elias J.E."/>
            <person name="Goswami T."/>
            <person name="Rad R."/>
            <person name="Beausoleil S.A."/>
            <person name="Villen J."/>
            <person name="Haas W."/>
            <person name="Sowa M.E."/>
            <person name="Gygi S.P."/>
        </authorList>
    </citation>
    <scope>PHOSPHORYLATION [LARGE SCALE ANALYSIS] AT SER-67; SER-71; SER-83; SER-87; SER-99; SER-103 AND SER-143</scope>
    <scope>IDENTIFICATION BY MASS SPECTROMETRY [LARGE SCALE ANALYSIS]</scope>
    <source>
        <tissue>Brain</tissue>
        <tissue>Brown adipose tissue</tissue>
        <tissue>Kidney</tissue>
        <tissue>Lung</tissue>
        <tissue>Pancreas</tissue>
        <tissue>Spleen</tissue>
        <tissue>Testis</tissue>
    </source>
</reference>
<reference key="7">
    <citation type="journal article" date="2010" name="PLoS Genet.">
        <title>Role for the mammalian Swi5-Sfr1 complex in DNA strand break repair through homologous recombination.</title>
        <authorList>
            <person name="Akamatsu Y."/>
            <person name="Jasin M."/>
        </authorList>
    </citation>
    <scope>FUNCTION</scope>
    <scope>IDENTIFICATION IN THE SWI5-SFR1 COMPLEX</scope>
    <scope>SUBCELLULAR LOCATION</scope>
</reference>
<gene>
    <name type="primary">Sfr1</name>
    <name type="synonym">Mei5</name>
    <name type="synonym">Meir5</name>
</gene>
<organism>
    <name type="scientific">Mus musculus</name>
    <name type="common">Mouse</name>
    <dbReference type="NCBI Taxonomy" id="10090"/>
    <lineage>
        <taxon>Eukaryota</taxon>
        <taxon>Metazoa</taxon>
        <taxon>Chordata</taxon>
        <taxon>Craniata</taxon>
        <taxon>Vertebrata</taxon>
        <taxon>Euteleostomi</taxon>
        <taxon>Mammalia</taxon>
        <taxon>Eutheria</taxon>
        <taxon>Euarchontoglires</taxon>
        <taxon>Glires</taxon>
        <taxon>Rodentia</taxon>
        <taxon>Myomorpha</taxon>
        <taxon>Muroidea</taxon>
        <taxon>Muridae</taxon>
        <taxon>Murinae</taxon>
        <taxon>Mus</taxon>
        <taxon>Mus</taxon>
    </lineage>
</organism>
<accession>Q8BP27</accession>
<accession>Q3TH62</accession>
<accession>Q3TI03</accession>
<accession>Q3TJK0</accession>
<accession>Q3UIQ6</accession>
<accession>Q8R3W0</accession>
<accession>Q9CRT7</accession>
<accession>Q9D0D7</accession>
<accession>Q9D116</accession>
<accession>Q9D4W4</accession>
<proteinExistence type="evidence at protein level"/>
<keyword id="KW-0025">Alternative splicing</keyword>
<keyword id="KW-0175">Coiled coil</keyword>
<keyword id="KW-0227">DNA damage</keyword>
<keyword id="KW-0234">DNA repair</keyword>
<keyword id="KW-0539">Nucleus</keyword>
<keyword id="KW-0597">Phosphoprotein</keyword>
<keyword id="KW-1185">Reference proteome</keyword>
<keyword id="KW-0804">Transcription</keyword>
<keyword id="KW-0805">Transcription regulation</keyword>
<dbReference type="EMBL" id="AK004073">
    <property type="protein sequence ID" value="BAB23154.1"/>
    <property type="status" value="ALT_FRAME"/>
    <property type="molecule type" value="mRNA"/>
</dbReference>
<dbReference type="EMBL" id="AK011531">
    <property type="protein sequence ID" value="BAB27680.1"/>
    <property type="molecule type" value="mRNA"/>
</dbReference>
<dbReference type="EMBL" id="AK014266">
    <property type="protein sequence ID" value="BAB29232.1"/>
    <property type="molecule type" value="mRNA"/>
</dbReference>
<dbReference type="EMBL" id="AK016079">
    <property type="protein sequence ID" value="BAB30105.1"/>
    <property type="molecule type" value="mRNA"/>
</dbReference>
<dbReference type="EMBL" id="AK077875">
    <property type="protein sequence ID" value="BAC37045.1"/>
    <property type="molecule type" value="mRNA"/>
</dbReference>
<dbReference type="EMBL" id="AK078147">
    <property type="protein sequence ID" value="BAC37148.1"/>
    <property type="molecule type" value="mRNA"/>
</dbReference>
<dbReference type="EMBL" id="AK146810">
    <property type="protein sequence ID" value="BAE27450.1"/>
    <property type="molecule type" value="mRNA"/>
</dbReference>
<dbReference type="EMBL" id="AK167406">
    <property type="protein sequence ID" value="BAE39495.1"/>
    <property type="molecule type" value="mRNA"/>
</dbReference>
<dbReference type="EMBL" id="AK168068">
    <property type="protein sequence ID" value="BAE40043.1"/>
    <property type="molecule type" value="mRNA"/>
</dbReference>
<dbReference type="EMBL" id="AK168427">
    <property type="protein sequence ID" value="BAE40336.1"/>
    <property type="molecule type" value="mRNA"/>
</dbReference>
<dbReference type="EMBL" id="BC024403">
    <property type="protein sequence ID" value="AAH24403.1"/>
    <property type="molecule type" value="mRNA"/>
</dbReference>
<dbReference type="CCDS" id="CCDS38019.1">
    <molecule id="Q8BP27-1"/>
</dbReference>
<dbReference type="RefSeq" id="NP_080653.2">
    <molecule id="Q8BP27-1"/>
    <property type="nucleotide sequence ID" value="NM_026377.2"/>
</dbReference>
<dbReference type="SMR" id="Q8BP27"/>
<dbReference type="BioGRID" id="212442">
    <property type="interactions" value="4"/>
</dbReference>
<dbReference type="FunCoup" id="Q8BP27">
    <property type="interactions" value="2773"/>
</dbReference>
<dbReference type="STRING" id="10090.ENSMUSP00000096954"/>
<dbReference type="iPTMnet" id="Q8BP27"/>
<dbReference type="PhosphoSitePlus" id="Q8BP27"/>
<dbReference type="SwissPalm" id="Q8BP27"/>
<dbReference type="jPOST" id="Q8BP27"/>
<dbReference type="PaxDb" id="10090-ENSMUSP00000096954"/>
<dbReference type="PeptideAtlas" id="Q8BP27"/>
<dbReference type="ProteomicsDB" id="255396">
    <molecule id="Q8BP27-1"/>
</dbReference>
<dbReference type="ProteomicsDB" id="255397">
    <molecule id="Q8BP27-2"/>
</dbReference>
<dbReference type="ProteomicsDB" id="255398">
    <molecule id="Q8BP27-3"/>
</dbReference>
<dbReference type="Pumba" id="Q8BP27"/>
<dbReference type="Antibodypedia" id="48828">
    <property type="antibodies" value="87 antibodies from 15 providers"/>
</dbReference>
<dbReference type="DNASU" id="67788"/>
<dbReference type="Ensembl" id="ENSMUST00000099353.6">
    <molecule id="Q8BP27-1"/>
    <property type="protein sequence ID" value="ENSMUSP00000096954.5"/>
    <property type="gene ID" value="ENSMUSG00000025066.11"/>
</dbReference>
<dbReference type="GeneID" id="67788"/>
<dbReference type="KEGG" id="mmu:67788"/>
<dbReference type="UCSC" id="uc008hvk.1">
    <molecule id="Q8BP27-1"/>
    <property type="organism name" value="mouse"/>
</dbReference>
<dbReference type="AGR" id="MGI:1915038"/>
<dbReference type="CTD" id="119392"/>
<dbReference type="MGI" id="MGI:1915038">
    <property type="gene designation" value="Sfr1"/>
</dbReference>
<dbReference type="VEuPathDB" id="HostDB:ENSMUSG00000025066"/>
<dbReference type="eggNOG" id="ENOG502S1QX">
    <property type="taxonomic scope" value="Eukaryota"/>
</dbReference>
<dbReference type="GeneTree" id="ENSGT00390000018550"/>
<dbReference type="HOGENOM" id="CLU_075586_1_0_1"/>
<dbReference type="InParanoid" id="Q8BP27"/>
<dbReference type="OMA" id="QPRENPP"/>
<dbReference type="OrthoDB" id="10051617at2759"/>
<dbReference type="PhylomeDB" id="Q8BP27"/>
<dbReference type="TreeFam" id="TF332725"/>
<dbReference type="BioGRID-ORCS" id="67788">
    <property type="hits" value="9 hits in 114 CRISPR screens"/>
</dbReference>
<dbReference type="ChiTaRS" id="Sfr1">
    <property type="organism name" value="mouse"/>
</dbReference>
<dbReference type="PRO" id="PR:Q8BP27"/>
<dbReference type="Proteomes" id="UP000000589">
    <property type="component" value="Chromosome 19"/>
</dbReference>
<dbReference type="RNAct" id="Q8BP27">
    <property type="molecule type" value="protein"/>
</dbReference>
<dbReference type="Bgee" id="ENSMUSG00000025066">
    <property type="expression patterns" value="Expressed in primary oocyte and 266 other cell types or tissues"/>
</dbReference>
<dbReference type="GO" id="GO:0005634">
    <property type="term" value="C:nucleus"/>
    <property type="evidence" value="ECO:0000314"/>
    <property type="project" value="UniProtKB"/>
</dbReference>
<dbReference type="GO" id="GO:0032798">
    <property type="term" value="C:Swi5-Sfr1 complex"/>
    <property type="evidence" value="ECO:0000314"/>
    <property type="project" value="UniProtKB"/>
</dbReference>
<dbReference type="GO" id="GO:0003713">
    <property type="term" value="F:transcription coactivator activity"/>
    <property type="evidence" value="ECO:0000250"/>
    <property type="project" value="UniProtKB"/>
</dbReference>
<dbReference type="GO" id="GO:0000724">
    <property type="term" value="P:double-strand break repair via homologous recombination"/>
    <property type="evidence" value="ECO:0000315"/>
    <property type="project" value="UniProtKB"/>
</dbReference>
<dbReference type="GO" id="GO:0045893">
    <property type="term" value="P:positive regulation of DNA-templated transcription"/>
    <property type="evidence" value="ECO:0000250"/>
    <property type="project" value="UniProtKB"/>
</dbReference>
<dbReference type="Gene3D" id="6.10.140.1020">
    <property type="match status" value="1"/>
</dbReference>
<dbReference type="InterPro" id="IPR042429">
    <property type="entry name" value="SFR1"/>
</dbReference>
<dbReference type="InterPro" id="IPR018468">
    <property type="entry name" value="SFR1/Mei5"/>
</dbReference>
<dbReference type="PANTHER" id="PTHR28643">
    <property type="entry name" value="SWI5-DEPENDENT RECOMBINATION DNA REPAIR PROTEIN 1 HOMOLOG"/>
    <property type="match status" value="1"/>
</dbReference>
<dbReference type="PANTHER" id="PTHR28643:SF1">
    <property type="entry name" value="SWI5-DEPENDENT RECOMBINATION DNA REPAIR PROTEIN 1 HOMOLOG"/>
    <property type="match status" value="1"/>
</dbReference>
<dbReference type="Pfam" id="PF10376">
    <property type="entry name" value="Mei5"/>
    <property type="match status" value="1"/>
</dbReference>
<comment type="function">
    <text evidence="1 4">Component of the SWI5-SFR1 complex, a complex required for double-strand break repair via homologous recombination (PubMed:20976249). Acts as a transcriptional modulator for ESR1.</text>
</comment>
<comment type="subunit">
    <text evidence="1 4">Component of the SWI5-SFR1 complex (PubMed:20976249). Interacts with RAD51; the interaction is weak (By similarity).</text>
</comment>
<comment type="subcellular location">
    <subcellularLocation>
        <location evidence="4">Nucleus</location>
    </subcellularLocation>
</comment>
<comment type="alternative products">
    <event type="alternative splicing"/>
    <isoform>
        <id>Q8BP27-1</id>
        <name>1</name>
        <sequence type="displayed"/>
    </isoform>
    <isoform>
        <id>Q8BP27-2</id>
        <name>2</name>
        <sequence type="described" ref="VSP_040905"/>
    </isoform>
    <isoform>
        <id>Q8BP27-3</id>
        <name>3</name>
        <sequence type="described" ref="VSP_040906 VSP_040907"/>
    </isoform>
</comment>
<comment type="similarity">
    <text evidence="7">Belongs to the SFR1/MEI5 family.</text>
</comment>
<comment type="sequence caution" evidence="7">
    <conflict type="frameshift">
        <sequence resource="EMBL-CDS" id="BAB23154"/>
    </conflict>
</comment>
<evidence type="ECO:0000250" key="1">
    <source>
        <dbReference type="UniProtKB" id="Q86XK3"/>
    </source>
</evidence>
<evidence type="ECO:0000255" key="2"/>
<evidence type="ECO:0000256" key="3">
    <source>
        <dbReference type="SAM" id="MobiDB-lite"/>
    </source>
</evidence>
<evidence type="ECO:0000269" key="4">
    <source>
    </source>
</evidence>
<evidence type="ECO:0000303" key="5">
    <source>
    </source>
</evidence>
<evidence type="ECO:0000303" key="6">
    <source>
    </source>
</evidence>
<evidence type="ECO:0000305" key="7"/>
<evidence type="ECO:0007744" key="8">
    <source>
    </source>
</evidence>
<evidence type="ECO:0007744" key="9">
    <source>
    </source>
</evidence>
<evidence type="ECO:0007744" key="10">
    <source>
    </source>
</evidence>
<evidence type="ECO:0007744" key="11">
    <source>
    </source>
</evidence>
<protein>
    <recommendedName>
        <fullName>Swi5-dependent recombination DNA repair protein 1 homolog</fullName>
    </recommendedName>
    <alternativeName>
        <fullName>Meiosis protein 5 homolog</fullName>
    </alternativeName>
</protein>
<sequence>MAEEGNQEFTSKMENSSDSASTSPDAPQPSENPPSPPTSPAAPQTSENPPSPPTSPAVPQTRENPPSPPTSPAAPQPRENPPSPPTSPAAPQPRENPPSPPTSPAAPQPRENPPSPHSNSSGKQPLSGTPKERLKKARSSSHSFCSVVKRMKVENDENNETLSEPGESSKEENCSKAQESLKNKDSEPGEKSSEEKNTCESKSSDTGSSNALPKESENAIIREKLKQEKIRLIRQVEEKEDLLRRLKLVKMYRIKNDVTELENLIKKWRKCGQRLLCELQSIMSEDEDEKLTLTELIDFYGIDDNLLHYNRSEEEFTGV</sequence>